<reference key="1">
    <citation type="journal article" date="2005" name="Science">
        <title>The transcriptional landscape of the mammalian genome.</title>
        <authorList>
            <person name="Carninci P."/>
            <person name="Kasukawa T."/>
            <person name="Katayama S."/>
            <person name="Gough J."/>
            <person name="Frith M.C."/>
            <person name="Maeda N."/>
            <person name="Oyama R."/>
            <person name="Ravasi T."/>
            <person name="Lenhard B."/>
            <person name="Wells C."/>
            <person name="Kodzius R."/>
            <person name="Shimokawa K."/>
            <person name="Bajic V.B."/>
            <person name="Brenner S.E."/>
            <person name="Batalov S."/>
            <person name="Forrest A.R."/>
            <person name="Zavolan M."/>
            <person name="Davis M.J."/>
            <person name="Wilming L.G."/>
            <person name="Aidinis V."/>
            <person name="Allen J.E."/>
            <person name="Ambesi-Impiombato A."/>
            <person name="Apweiler R."/>
            <person name="Aturaliya R.N."/>
            <person name="Bailey T.L."/>
            <person name="Bansal M."/>
            <person name="Baxter L."/>
            <person name="Beisel K.W."/>
            <person name="Bersano T."/>
            <person name="Bono H."/>
            <person name="Chalk A.M."/>
            <person name="Chiu K.P."/>
            <person name="Choudhary V."/>
            <person name="Christoffels A."/>
            <person name="Clutterbuck D.R."/>
            <person name="Crowe M.L."/>
            <person name="Dalla E."/>
            <person name="Dalrymple B.P."/>
            <person name="de Bono B."/>
            <person name="Della Gatta G."/>
            <person name="di Bernardo D."/>
            <person name="Down T."/>
            <person name="Engstrom P."/>
            <person name="Fagiolini M."/>
            <person name="Faulkner G."/>
            <person name="Fletcher C.F."/>
            <person name="Fukushima T."/>
            <person name="Furuno M."/>
            <person name="Futaki S."/>
            <person name="Gariboldi M."/>
            <person name="Georgii-Hemming P."/>
            <person name="Gingeras T.R."/>
            <person name="Gojobori T."/>
            <person name="Green R.E."/>
            <person name="Gustincich S."/>
            <person name="Harbers M."/>
            <person name="Hayashi Y."/>
            <person name="Hensch T.K."/>
            <person name="Hirokawa N."/>
            <person name="Hill D."/>
            <person name="Huminiecki L."/>
            <person name="Iacono M."/>
            <person name="Ikeo K."/>
            <person name="Iwama A."/>
            <person name="Ishikawa T."/>
            <person name="Jakt M."/>
            <person name="Kanapin A."/>
            <person name="Katoh M."/>
            <person name="Kawasawa Y."/>
            <person name="Kelso J."/>
            <person name="Kitamura H."/>
            <person name="Kitano H."/>
            <person name="Kollias G."/>
            <person name="Krishnan S.P."/>
            <person name="Kruger A."/>
            <person name="Kummerfeld S.K."/>
            <person name="Kurochkin I.V."/>
            <person name="Lareau L.F."/>
            <person name="Lazarevic D."/>
            <person name="Lipovich L."/>
            <person name="Liu J."/>
            <person name="Liuni S."/>
            <person name="McWilliam S."/>
            <person name="Madan Babu M."/>
            <person name="Madera M."/>
            <person name="Marchionni L."/>
            <person name="Matsuda H."/>
            <person name="Matsuzawa S."/>
            <person name="Miki H."/>
            <person name="Mignone F."/>
            <person name="Miyake S."/>
            <person name="Morris K."/>
            <person name="Mottagui-Tabar S."/>
            <person name="Mulder N."/>
            <person name="Nakano N."/>
            <person name="Nakauchi H."/>
            <person name="Ng P."/>
            <person name="Nilsson R."/>
            <person name="Nishiguchi S."/>
            <person name="Nishikawa S."/>
            <person name="Nori F."/>
            <person name="Ohara O."/>
            <person name="Okazaki Y."/>
            <person name="Orlando V."/>
            <person name="Pang K.C."/>
            <person name="Pavan W.J."/>
            <person name="Pavesi G."/>
            <person name="Pesole G."/>
            <person name="Petrovsky N."/>
            <person name="Piazza S."/>
            <person name="Reed J."/>
            <person name="Reid J.F."/>
            <person name="Ring B.Z."/>
            <person name="Ringwald M."/>
            <person name="Rost B."/>
            <person name="Ruan Y."/>
            <person name="Salzberg S.L."/>
            <person name="Sandelin A."/>
            <person name="Schneider C."/>
            <person name="Schoenbach C."/>
            <person name="Sekiguchi K."/>
            <person name="Semple C.A."/>
            <person name="Seno S."/>
            <person name="Sessa L."/>
            <person name="Sheng Y."/>
            <person name="Shibata Y."/>
            <person name="Shimada H."/>
            <person name="Shimada K."/>
            <person name="Silva D."/>
            <person name="Sinclair B."/>
            <person name="Sperling S."/>
            <person name="Stupka E."/>
            <person name="Sugiura K."/>
            <person name="Sultana R."/>
            <person name="Takenaka Y."/>
            <person name="Taki K."/>
            <person name="Tammoja K."/>
            <person name="Tan S.L."/>
            <person name="Tang S."/>
            <person name="Taylor M.S."/>
            <person name="Tegner J."/>
            <person name="Teichmann S.A."/>
            <person name="Ueda H.R."/>
            <person name="van Nimwegen E."/>
            <person name="Verardo R."/>
            <person name="Wei C.L."/>
            <person name="Yagi K."/>
            <person name="Yamanishi H."/>
            <person name="Zabarovsky E."/>
            <person name="Zhu S."/>
            <person name="Zimmer A."/>
            <person name="Hide W."/>
            <person name="Bult C."/>
            <person name="Grimmond S.M."/>
            <person name="Teasdale R.D."/>
            <person name="Liu E.T."/>
            <person name="Brusic V."/>
            <person name="Quackenbush J."/>
            <person name="Wahlestedt C."/>
            <person name="Mattick J.S."/>
            <person name="Hume D.A."/>
            <person name="Kai C."/>
            <person name="Sasaki D."/>
            <person name="Tomaru Y."/>
            <person name="Fukuda S."/>
            <person name="Kanamori-Katayama M."/>
            <person name="Suzuki M."/>
            <person name="Aoki J."/>
            <person name="Arakawa T."/>
            <person name="Iida J."/>
            <person name="Imamura K."/>
            <person name="Itoh M."/>
            <person name="Kato T."/>
            <person name="Kawaji H."/>
            <person name="Kawagashira N."/>
            <person name="Kawashima T."/>
            <person name="Kojima M."/>
            <person name="Kondo S."/>
            <person name="Konno H."/>
            <person name="Nakano K."/>
            <person name="Ninomiya N."/>
            <person name="Nishio T."/>
            <person name="Okada M."/>
            <person name="Plessy C."/>
            <person name="Shibata K."/>
            <person name="Shiraki T."/>
            <person name="Suzuki S."/>
            <person name="Tagami M."/>
            <person name="Waki K."/>
            <person name="Watahiki A."/>
            <person name="Okamura-Oho Y."/>
            <person name="Suzuki H."/>
            <person name="Kawai J."/>
            <person name="Hayashizaki Y."/>
        </authorList>
    </citation>
    <scope>NUCLEOTIDE SEQUENCE [LARGE SCALE MRNA]</scope>
    <source>
        <strain>C57BL/6J</strain>
        <tissue>Testis</tissue>
    </source>
</reference>
<reference key="2">
    <citation type="journal article" date="2010" name="Cell">
        <title>A tissue-specific atlas of mouse protein phosphorylation and expression.</title>
        <authorList>
            <person name="Huttlin E.L."/>
            <person name="Jedrychowski M.P."/>
            <person name="Elias J.E."/>
            <person name="Goswami T."/>
            <person name="Rad R."/>
            <person name="Beausoleil S.A."/>
            <person name="Villen J."/>
            <person name="Haas W."/>
            <person name="Sowa M.E."/>
            <person name="Gygi S.P."/>
        </authorList>
    </citation>
    <scope>IDENTIFICATION BY MASS SPECTROMETRY [LARGE SCALE ANALYSIS]</scope>
    <source>
        <tissue>Testis</tissue>
    </source>
</reference>
<reference key="3">
    <citation type="journal article" date="2020" name="Biol. Reprod.">
        <title>Tmprss12 is required for sperm motility and uterotubal junction migration in mice.</title>
        <authorList>
            <person name="Larasati T."/>
            <person name="Noda T."/>
            <person name="Fujihara Y."/>
            <person name="Shimada K."/>
            <person name="Tobita T."/>
            <person name="Yu Z."/>
            <person name="Matzuk M.M."/>
            <person name="Ikawa M."/>
        </authorList>
    </citation>
    <scope>FUNCTION</scope>
    <scope>SUBCELLULAR LOCATION</scope>
    <scope>TISSUE SPECIFICITY</scope>
    <scope>DEVELOPMENTAL STAGE</scope>
    <scope>DISRUPTION PHENOTYPE</scope>
</reference>
<reference key="4">
    <citation type="journal article" date="2022" name="Front. Cell Dev. Biol.">
        <title>TMPRSS12 Functions in Meiosis and Spermiogenesis and Is Required for Male Fertility in Mice.</title>
        <authorList>
            <person name="Zhang J."/>
            <person name="Zhou X."/>
            <person name="Wan D."/>
            <person name="Yu L."/>
            <person name="Chen X."/>
            <person name="Yan T."/>
            <person name="Wu Z."/>
            <person name="Zheng M."/>
            <person name="Zhu F."/>
            <person name="Zhu H."/>
        </authorList>
    </citation>
    <scope>FUNCTION</scope>
    <scope>SUBCELLULAR LOCATION</scope>
    <scope>TISSUE SPECIFICITY</scope>
    <scope>DEVELOPMENTAL STAGE</scope>
    <scope>DISRUPTION PHENOTYPE</scope>
</reference>
<dbReference type="EC" id="3.4.21.-"/>
<dbReference type="EMBL" id="AK132967">
    <property type="protein sequence ID" value="BAE21447.1"/>
    <property type="molecule type" value="mRNA"/>
</dbReference>
<dbReference type="CCDS" id="CCDS49732.1"/>
<dbReference type="RefSeq" id="NP_898932.2">
    <property type="nucleotide sequence ID" value="NM_183109.4"/>
</dbReference>
<dbReference type="SMR" id="Q3V0Q7"/>
<dbReference type="FunCoup" id="Q3V0Q7">
    <property type="interactions" value="89"/>
</dbReference>
<dbReference type="STRING" id="10090.ENSMUSP00000093914"/>
<dbReference type="MEROPS" id="S01.958"/>
<dbReference type="GlyCosmos" id="Q3V0Q7">
    <property type="glycosylation" value="3 sites, No reported glycans"/>
</dbReference>
<dbReference type="GlyGen" id="Q3V0Q7">
    <property type="glycosylation" value="3 sites"/>
</dbReference>
<dbReference type="PhosphoSitePlus" id="Q3V0Q7"/>
<dbReference type="SwissPalm" id="Q3V0Q7"/>
<dbReference type="PaxDb" id="10090-ENSMUSP00000093914"/>
<dbReference type="ProteomicsDB" id="260712"/>
<dbReference type="Antibodypedia" id="2710">
    <property type="antibodies" value="75 antibodies from 15 providers"/>
</dbReference>
<dbReference type="DNASU" id="75002"/>
<dbReference type="Ensembl" id="ENSMUST00000096200.6">
    <property type="protein sequence ID" value="ENSMUSP00000093914.5"/>
    <property type="gene ID" value="ENSMUSG00000045631.11"/>
</dbReference>
<dbReference type="GeneID" id="75002"/>
<dbReference type="KEGG" id="mmu:75002"/>
<dbReference type="UCSC" id="uc007xqt.1">
    <property type="organism name" value="mouse"/>
</dbReference>
<dbReference type="AGR" id="MGI:1922252"/>
<dbReference type="CTD" id="283471"/>
<dbReference type="MGI" id="MGI:1922252">
    <property type="gene designation" value="Tmprss12"/>
</dbReference>
<dbReference type="VEuPathDB" id="HostDB:ENSMUSG00000045631"/>
<dbReference type="eggNOG" id="KOG3627">
    <property type="taxonomic scope" value="Eukaryota"/>
</dbReference>
<dbReference type="GeneTree" id="ENSGT00940000161878"/>
<dbReference type="HOGENOM" id="CLU_006842_0_4_1"/>
<dbReference type="InParanoid" id="Q3V0Q7"/>
<dbReference type="OMA" id="HEAEVHY"/>
<dbReference type="OrthoDB" id="6339452at2759"/>
<dbReference type="PhylomeDB" id="Q3V0Q7"/>
<dbReference type="TreeFam" id="TF335943"/>
<dbReference type="BioGRID-ORCS" id="75002">
    <property type="hits" value="3 hits in 77 CRISPR screens"/>
</dbReference>
<dbReference type="PRO" id="PR:Q3V0Q7"/>
<dbReference type="Proteomes" id="UP000000589">
    <property type="component" value="Chromosome 15"/>
</dbReference>
<dbReference type="RNAct" id="Q3V0Q7">
    <property type="molecule type" value="protein"/>
</dbReference>
<dbReference type="Bgee" id="ENSMUSG00000045631">
    <property type="expression patterns" value="Expressed in spermatocyte and 11 other cell types or tissues"/>
</dbReference>
<dbReference type="GO" id="GO:0001669">
    <property type="term" value="C:acrosomal vesicle"/>
    <property type="evidence" value="ECO:0000314"/>
    <property type="project" value="UniProtKB"/>
</dbReference>
<dbReference type="GO" id="GO:0005886">
    <property type="term" value="C:plasma membrane"/>
    <property type="evidence" value="ECO:0007669"/>
    <property type="project" value="UniProtKB-SubCell"/>
</dbReference>
<dbReference type="GO" id="GO:0004252">
    <property type="term" value="F:serine-type endopeptidase activity"/>
    <property type="evidence" value="ECO:0007669"/>
    <property type="project" value="InterPro"/>
</dbReference>
<dbReference type="GO" id="GO:0001675">
    <property type="term" value="P:acrosome assembly"/>
    <property type="evidence" value="ECO:0000315"/>
    <property type="project" value="UniProtKB"/>
</dbReference>
<dbReference type="GO" id="GO:0007339">
    <property type="term" value="P:binding of sperm to zona pellucida"/>
    <property type="evidence" value="ECO:0000315"/>
    <property type="project" value="MGI"/>
</dbReference>
<dbReference type="GO" id="GO:1902492">
    <property type="term" value="P:positive regulation of sperm capacitation"/>
    <property type="evidence" value="ECO:0000315"/>
    <property type="project" value="UniProtKB"/>
</dbReference>
<dbReference type="GO" id="GO:0016485">
    <property type="term" value="P:protein processing"/>
    <property type="evidence" value="ECO:0000315"/>
    <property type="project" value="MGI"/>
</dbReference>
<dbReference type="GO" id="GO:0007283">
    <property type="term" value="P:spermatogenesis"/>
    <property type="evidence" value="ECO:0000315"/>
    <property type="project" value="UniProtKB"/>
</dbReference>
<dbReference type="CDD" id="cd00190">
    <property type="entry name" value="Tryp_SPc"/>
    <property type="match status" value="1"/>
</dbReference>
<dbReference type="FunFam" id="2.40.10.10:FF:000003">
    <property type="entry name" value="Transmembrane serine protease 3"/>
    <property type="match status" value="1"/>
</dbReference>
<dbReference type="Gene3D" id="2.40.10.10">
    <property type="entry name" value="Trypsin-like serine proteases"/>
    <property type="match status" value="2"/>
</dbReference>
<dbReference type="InterPro" id="IPR009003">
    <property type="entry name" value="Peptidase_S1_PA"/>
</dbReference>
<dbReference type="InterPro" id="IPR043504">
    <property type="entry name" value="Peptidase_S1_PA_chymotrypsin"/>
</dbReference>
<dbReference type="InterPro" id="IPR001314">
    <property type="entry name" value="Peptidase_S1A"/>
</dbReference>
<dbReference type="InterPro" id="IPR001254">
    <property type="entry name" value="Trypsin_dom"/>
</dbReference>
<dbReference type="InterPro" id="IPR018114">
    <property type="entry name" value="TRYPSIN_HIS"/>
</dbReference>
<dbReference type="InterPro" id="IPR033116">
    <property type="entry name" value="TRYPSIN_SER"/>
</dbReference>
<dbReference type="PANTHER" id="PTHR24252">
    <property type="entry name" value="ACROSIN-RELATED"/>
    <property type="match status" value="1"/>
</dbReference>
<dbReference type="PANTHER" id="PTHR24252:SF21">
    <property type="entry name" value="TRANSMEMBRANE SERINE PROTEASE 12"/>
    <property type="match status" value="1"/>
</dbReference>
<dbReference type="Pfam" id="PF00089">
    <property type="entry name" value="Trypsin"/>
    <property type="match status" value="1"/>
</dbReference>
<dbReference type="PRINTS" id="PR00722">
    <property type="entry name" value="CHYMOTRYPSIN"/>
</dbReference>
<dbReference type="SMART" id="SM00020">
    <property type="entry name" value="Tryp_SPc"/>
    <property type="match status" value="1"/>
</dbReference>
<dbReference type="SUPFAM" id="SSF50494">
    <property type="entry name" value="Trypsin-like serine proteases"/>
    <property type="match status" value="1"/>
</dbReference>
<dbReference type="PROSITE" id="PS50240">
    <property type="entry name" value="TRYPSIN_DOM"/>
    <property type="match status" value="1"/>
</dbReference>
<dbReference type="PROSITE" id="PS00134">
    <property type="entry name" value="TRYPSIN_HIS"/>
    <property type="match status" value="1"/>
</dbReference>
<dbReference type="PROSITE" id="PS00135">
    <property type="entry name" value="TRYPSIN_SER"/>
    <property type="match status" value="1"/>
</dbReference>
<proteinExistence type="evidence at protein level"/>
<gene>
    <name evidence="7" type="primary">Tmprss12</name>
</gene>
<organism>
    <name type="scientific">Mus musculus</name>
    <name type="common">Mouse</name>
    <dbReference type="NCBI Taxonomy" id="10090"/>
    <lineage>
        <taxon>Eukaryota</taxon>
        <taxon>Metazoa</taxon>
        <taxon>Chordata</taxon>
        <taxon>Craniata</taxon>
        <taxon>Vertebrata</taxon>
        <taxon>Euteleostomi</taxon>
        <taxon>Mammalia</taxon>
        <taxon>Eutheria</taxon>
        <taxon>Euarchontoglires</taxon>
        <taxon>Glires</taxon>
        <taxon>Rodentia</taxon>
        <taxon>Myomorpha</taxon>
        <taxon>Muroidea</taxon>
        <taxon>Muridae</taxon>
        <taxon>Murinae</taxon>
        <taxon>Mus</taxon>
        <taxon>Mus</taxon>
    </lineage>
</organism>
<evidence type="ECO:0000250" key="1"/>
<evidence type="ECO:0000250" key="2">
    <source>
        <dbReference type="UniProtKB" id="Q86WS5"/>
    </source>
</evidence>
<evidence type="ECO:0000255" key="3"/>
<evidence type="ECO:0000255" key="4">
    <source>
        <dbReference type="PROSITE-ProRule" id="PRU00274"/>
    </source>
</evidence>
<evidence type="ECO:0000269" key="5">
    <source>
    </source>
</evidence>
<evidence type="ECO:0000269" key="6">
    <source>
    </source>
</evidence>
<evidence type="ECO:0000312" key="7">
    <source>
        <dbReference type="MGI" id="MGI:1922252"/>
    </source>
</evidence>
<protein>
    <recommendedName>
        <fullName evidence="2">Transmembrane protease serine 12</fullName>
        <ecNumber>3.4.21.-</ecNumber>
    </recommendedName>
</protein>
<feature type="signal peptide" evidence="3">
    <location>
        <begin position="1"/>
        <end position="18"/>
    </location>
</feature>
<feature type="chain" id="PRO_0000290439" description="Transmembrane protease serine 12">
    <location>
        <begin position="19"/>
        <end position="336"/>
    </location>
</feature>
<feature type="topological domain" description="Extracellular" evidence="3">
    <location>
        <begin position="19"/>
        <end position="312"/>
    </location>
</feature>
<feature type="transmembrane region" description="Helical" evidence="3">
    <location>
        <begin position="313"/>
        <end position="333"/>
    </location>
</feature>
<feature type="topological domain" description="Cytoplasmic" evidence="3">
    <location>
        <begin position="334"/>
        <end position="336"/>
    </location>
</feature>
<feature type="domain" description="Peptidase S1" evidence="4">
    <location>
        <begin position="66"/>
        <end position="306"/>
    </location>
</feature>
<feature type="active site" description="Charge relay system" evidence="1">
    <location>
        <position position="110"/>
    </location>
</feature>
<feature type="active site" description="Charge relay system" evidence="1">
    <location>
        <position position="159"/>
    </location>
</feature>
<feature type="active site" description="Charge relay system" evidence="1">
    <location>
        <position position="256"/>
    </location>
</feature>
<feature type="glycosylation site" description="N-linked (GlcNAc...) asparagine" evidence="3">
    <location>
        <position position="207"/>
    </location>
</feature>
<feature type="glycosylation site" description="N-linked (GlcNAc...) asparagine" evidence="3">
    <location>
        <position position="237"/>
    </location>
</feature>
<feature type="glycosylation site" description="N-linked (GlcNAc...) asparagine" evidence="3">
    <location>
        <position position="246"/>
    </location>
</feature>
<feature type="disulfide bond" evidence="4">
    <location>
        <begin position="95"/>
        <end position="111"/>
    </location>
</feature>
<feature type="disulfide bond" evidence="4">
    <location>
        <begin position="194"/>
        <end position="262"/>
    </location>
</feature>
<feature type="disulfide bond" evidence="4">
    <location>
        <begin position="225"/>
        <end position="241"/>
    </location>
</feature>
<feature type="disulfide bond" evidence="4">
    <location>
        <begin position="252"/>
        <end position="282"/>
    </location>
</feature>
<comment type="function">
    <text evidence="5 6">Required for male fertility (PubMed:32529245, PubMed:35547804). Plays a critical role in sperm capacitation and acrosome reactions during fertilization, and also plays a role in the regulation of proteins involved in spermatogenesis (PubMed:35547804). Regulates protein pathways that promote chromosomal synapsis formation, double-strand break repair, formation of the inner mitochondrial membrane cristae and apoptosis in developing sperm (PubMed:35547804). Required for normal sperm motility and binding to the zona pellucida, potentially via a role in ADAM3 protein maturation (PubMed:32529245).</text>
</comment>
<comment type="subcellular location">
    <subcellularLocation>
        <location evidence="2">Cell membrane</location>
        <topology evidence="3">Single-pass membrane protein</topology>
    </subcellularLocation>
    <subcellularLocation>
        <location evidence="5 6">Cytoplasmic vesicle</location>
        <location evidence="5 6">Secretory vesicle</location>
        <location evidence="5 6">Acrosome</location>
    </subcellularLocation>
    <text evidence="5">Expression in the acrosome decreases after acrosome reaction.</text>
</comment>
<comment type="tissue specificity">
    <text evidence="5 6">Exclusively expressed in the testis, from spermatocytes to elongated spermatids (at protein level).</text>
</comment>
<comment type="developmental stage">
    <text evidence="5 6">Initially expressed in the testis at 10 days of age, expression increases until 2 weeks of age whereafter protein abundance remains consistent (at protein level).</text>
</comment>
<comment type="disruption phenotype">
    <text evidence="5 6">Male mice are infertile (PubMed:32529245, PubMed:35547804). Decrease in sperm count and sperm motility, as a result of decreased numbers of pachytene spermatocytes, diplotene spermatocytes, round spermatids and elongated spermatids (PubMed:35547804). Increase in the rate of apoptosis among spermatocytes accompanied by abnormal chromosomal synapsis and failure of double-strand break repair during meiosis in the testis (PubMed:35547804). Increase in the number of sperm with abnormal mitochondria that show blurred or absent inner mitochondrial membrane cristae with decreased ATP content and oxygen consumption, together with a decrease in expression of key markers of oxidative phosphorylation such as Mtatp6/MTATP and Cstb/MTCYB (PubMed:35547804). Ejaculated sperm fail to migrate from the uterus to the oviduct due to significantly reduced sperm motility (PubMed:32529245). Spermatozoa binding to the zona pellucida is significantly reduced in vitro, resulting in a loss of fertilization, this can be rescued via weakening of the zona pellucida (PubMed:32529245). Decrease in mature ADAM3 protein in spermatozoa but normal levels are seen in testicular germ cells (PubMed:32529245). In the testis there is a decrease in abundance of proteins involved in meiosis, apoptosis, mitochondrial function and cell adhesion such as Klc3, Rad51, Bccip, Pgam2 and Mgst1 (PubMed:35547804).</text>
</comment>
<comment type="similarity">
    <text evidence="4">Belongs to the peptidase S1 family.</text>
</comment>
<name>TMPSC_MOUSE</name>
<accession>Q3V0Q7</accession>
<sequence length="336" mass="36916">MASWALSAALLCLGGAFAYSELHSLSLREGSALGQATVPGPPEEEQPVTKDCGIAPLRGAVEGSRIIGGSQADTGAWPWQVSLQVQDGDILMHVCGGALVRDRWVLTAAHCTKEARDPLKWRAVMGTNDLTRSPYHSRNIRITDIIIPPDFIMETFVNDIALFRLKRAVRYNDYIQPICLPFGVFQKLDQNTACFISGWGRTREEGNGTTILQEAKVHFISREVCSSDQGYSGMIPNTSFCAGHENGTFDSCRGDSGGPLMCYLPEHSRYFVMGITSYGHGCGRRHFPGVYSNPSFFQEWMTHYLSQGNINRLFNMDIVLGQVLTALGSVILLGVT</sequence>
<keyword id="KW-1003">Cell membrane</keyword>
<keyword id="KW-0968">Cytoplasmic vesicle</keyword>
<keyword id="KW-0221">Differentiation</keyword>
<keyword id="KW-1015">Disulfide bond</keyword>
<keyword id="KW-0278">Fertilization</keyword>
<keyword id="KW-0325">Glycoprotein</keyword>
<keyword id="KW-0378">Hydrolase</keyword>
<keyword id="KW-0472">Membrane</keyword>
<keyword id="KW-0645">Protease</keyword>
<keyword id="KW-1185">Reference proteome</keyword>
<keyword id="KW-0720">Serine protease</keyword>
<keyword id="KW-0732">Signal</keyword>
<keyword id="KW-0744">Spermatogenesis</keyword>
<keyword id="KW-0812">Transmembrane</keyword>
<keyword id="KW-1133">Transmembrane helix</keyword>